<dbReference type="EC" id="3.6.4.13"/>
<dbReference type="EMBL" id="X79802">
    <property type="protein sequence ID" value="CAA56197.1"/>
    <property type="molecule type" value="mRNA"/>
</dbReference>
<dbReference type="EMBL" id="L06018">
    <property type="protein sequence ID" value="AAB65835.1"/>
    <property type="molecule type" value="Genomic_DNA"/>
</dbReference>
<dbReference type="EMBL" id="AE014134">
    <property type="protein sequence ID" value="AAF52261.1"/>
    <property type="molecule type" value="Genomic_DNA"/>
</dbReference>
<dbReference type="EMBL" id="AE014134">
    <property type="protein sequence ID" value="AAN10544.1"/>
    <property type="molecule type" value="Genomic_DNA"/>
</dbReference>
<dbReference type="EMBL" id="AE014134">
    <property type="protein sequence ID" value="AAN10545.1"/>
    <property type="molecule type" value="Genomic_DNA"/>
</dbReference>
<dbReference type="EMBL" id="AY118921">
    <property type="protein sequence ID" value="AAM50781.1"/>
    <property type="molecule type" value="mRNA"/>
</dbReference>
<dbReference type="PIR" id="S51601">
    <property type="entry name" value="S51601"/>
</dbReference>
<dbReference type="RefSeq" id="NP_723089.1">
    <property type="nucleotide sequence ID" value="NM_164646.3"/>
</dbReference>
<dbReference type="RefSeq" id="NP_723090.1">
    <property type="nucleotide sequence ID" value="NM_164647.1"/>
</dbReference>
<dbReference type="RefSeq" id="NP_723091.1">
    <property type="nucleotide sequence ID" value="NM_164648.2"/>
</dbReference>
<dbReference type="SMR" id="Q27268"/>
<dbReference type="BioGRID" id="59949">
    <property type="interactions" value="58"/>
</dbReference>
<dbReference type="ComplexPortal" id="CPX-2261">
    <property type="entry name" value="TREX transcription-export complex"/>
</dbReference>
<dbReference type="DIP" id="DIP-20199N"/>
<dbReference type="FunCoup" id="Q27268">
    <property type="interactions" value="2600"/>
</dbReference>
<dbReference type="IntAct" id="Q27268">
    <property type="interactions" value="51"/>
</dbReference>
<dbReference type="STRING" id="7227.FBpp0078754"/>
<dbReference type="PaxDb" id="7227-FBpp0078754"/>
<dbReference type="DNASU" id="33781"/>
<dbReference type="EnsemblMetazoa" id="FBtr0079123">
    <property type="protein sequence ID" value="FBpp0078754"/>
    <property type="gene ID" value="FBgn0014189"/>
</dbReference>
<dbReference type="EnsemblMetazoa" id="FBtr0079124">
    <property type="protein sequence ID" value="FBpp0078755"/>
    <property type="gene ID" value="FBgn0014189"/>
</dbReference>
<dbReference type="EnsemblMetazoa" id="FBtr0079125">
    <property type="protein sequence ID" value="FBpp0078756"/>
    <property type="gene ID" value="FBgn0014189"/>
</dbReference>
<dbReference type="GeneID" id="33781"/>
<dbReference type="KEGG" id="dme:Dmel_CG7269"/>
<dbReference type="AGR" id="FB:FBgn0014189"/>
<dbReference type="CTD" id="33781"/>
<dbReference type="FlyBase" id="FBgn0014189">
    <property type="gene designation" value="Hel25E"/>
</dbReference>
<dbReference type="VEuPathDB" id="VectorBase:FBgn0014189"/>
<dbReference type="eggNOG" id="KOG0329">
    <property type="taxonomic scope" value="Eukaryota"/>
</dbReference>
<dbReference type="GeneTree" id="ENSGT00940000154912"/>
<dbReference type="HOGENOM" id="CLU_003041_1_0_1"/>
<dbReference type="InParanoid" id="Q27268"/>
<dbReference type="OMA" id="YAHVEPK"/>
<dbReference type="OrthoDB" id="196131at2759"/>
<dbReference type="PhylomeDB" id="Q27268"/>
<dbReference type="Reactome" id="R-DME-159236">
    <property type="pathway name" value="Transport of Mature mRNA derived from an Intron-Containing Transcript"/>
</dbReference>
<dbReference type="Reactome" id="R-DME-72163">
    <property type="pathway name" value="mRNA Splicing - Major Pathway"/>
</dbReference>
<dbReference type="Reactome" id="R-DME-72187">
    <property type="pathway name" value="mRNA 3'-end processing"/>
</dbReference>
<dbReference type="Reactome" id="R-DME-73856">
    <property type="pathway name" value="RNA Polymerase II Transcription Termination"/>
</dbReference>
<dbReference type="Reactome" id="R-DME-9013418">
    <property type="pathway name" value="RHOBTB2 GTPase cycle"/>
</dbReference>
<dbReference type="SignaLink" id="Q27268"/>
<dbReference type="BioGRID-ORCS" id="33781">
    <property type="hits" value="0 hits in 3 CRISPR screens"/>
</dbReference>
<dbReference type="GenomeRNAi" id="33781"/>
<dbReference type="PRO" id="PR:Q27268"/>
<dbReference type="Proteomes" id="UP000000803">
    <property type="component" value="Chromosome 2L"/>
</dbReference>
<dbReference type="Bgee" id="FBgn0014189">
    <property type="expression patterns" value="Expressed in secondary oocyte and 219 other cell types or tissues"/>
</dbReference>
<dbReference type="ExpressionAtlas" id="Q27268">
    <property type="expression patterns" value="baseline and differential"/>
</dbReference>
<dbReference type="GO" id="GO:0016607">
    <property type="term" value="C:nuclear speck"/>
    <property type="evidence" value="ECO:0007669"/>
    <property type="project" value="UniProtKB-SubCell"/>
</dbReference>
<dbReference type="GO" id="GO:0005634">
    <property type="term" value="C:nucleus"/>
    <property type="evidence" value="ECO:0000314"/>
    <property type="project" value="FlyBase"/>
</dbReference>
<dbReference type="GO" id="GO:0043186">
    <property type="term" value="C:P granule"/>
    <property type="evidence" value="ECO:0000314"/>
    <property type="project" value="FlyBase"/>
</dbReference>
<dbReference type="GO" id="GO:0005681">
    <property type="term" value="C:spliceosomal complex"/>
    <property type="evidence" value="ECO:0000250"/>
    <property type="project" value="FlyBase"/>
</dbReference>
<dbReference type="GO" id="GO:0000346">
    <property type="term" value="C:transcription export complex"/>
    <property type="evidence" value="ECO:0000250"/>
    <property type="project" value="FlyBase"/>
</dbReference>
<dbReference type="GO" id="GO:0005524">
    <property type="term" value="F:ATP binding"/>
    <property type="evidence" value="ECO:0007669"/>
    <property type="project" value="UniProtKB-KW"/>
</dbReference>
<dbReference type="GO" id="GO:0016887">
    <property type="term" value="F:ATP hydrolysis activity"/>
    <property type="evidence" value="ECO:0007669"/>
    <property type="project" value="RHEA"/>
</dbReference>
<dbReference type="GO" id="GO:0003729">
    <property type="term" value="F:mRNA binding"/>
    <property type="evidence" value="ECO:0000318"/>
    <property type="project" value="GO_Central"/>
</dbReference>
<dbReference type="GO" id="GO:0034584">
    <property type="term" value="F:piRNA binding"/>
    <property type="evidence" value="ECO:0000314"/>
    <property type="project" value="FlyBase"/>
</dbReference>
<dbReference type="GO" id="GO:0003724">
    <property type="term" value="F:RNA helicase activity"/>
    <property type="evidence" value="ECO:0000250"/>
    <property type="project" value="FlyBase"/>
</dbReference>
<dbReference type="GO" id="GO:0006338">
    <property type="term" value="P:chromatin remodeling"/>
    <property type="evidence" value="ECO:0000315"/>
    <property type="project" value="FlyBase"/>
</dbReference>
<dbReference type="GO" id="GO:0006406">
    <property type="term" value="P:mRNA export from nucleus"/>
    <property type="evidence" value="ECO:0000315"/>
    <property type="project" value="FlyBase"/>
</dbReference>
<dbReference type="GO" id="GO:0000398">
    <property type="term" value="P:mRNA splicing, via spliceosome"/>
    <property type="evidence" value="ECO:0000250"/>
    <property type="project" value="FlyBase"/>
</dbReference>
<dbReference type="GO" id="GO:0140543">
    <property type="term" value="P:positive regulation of piRNA transcription"/>
    <property type="evidence" value="ECO:0000315"/>
    <property type="project" value="FlyBase"/>
</dbReference>
<dbReference type="GO" id="GO:0000381">
    <property type="term" value="P:regulation of alternative mRNA splicing, via spliceosome"/>
    <property type="evidence" value="ECO:0000315"/>
    <property type="project" value="FlyBase"/>
</dbReference>
<dbReference type="GO" id="GO:0140965">
    <property type="term" value="P:secondary piRNA processing"/>
    <property type="evidence" value="ECO:0000315"/>
    <property type="project" value="FlyBase"/>
</dbReference>
<dbReference type="CDD" id="cd17950">
    <property type="entry name" value="DEADc_DDX39"/>
    <property type="match status" value="1"/>
</dbReference>
<dbReference type="CDD" id="cd18787">
    <property type="entry name" value="SF2_C_DEAD"/>
    <property type="match status" value="1"/>
</dbReference>
<dbReference type="FunFam" id="3.40.50.300:FF:000111">
    <property type="entry name" value="DEAD-box ATP-dependent RNA helicase"/>
    <property type="match status" value="1"/>
</dbReference>
<dbReference type="FunFam" id="3.40.50.300:FF:000168">
    <property type="entry name" value="DEAD-box ATP-dependent RNA helicase 56-like"/>
    <property type="match status" value="1"/>
</dbReference>
<dbReference type="Gene3D" id="3.40.50.300">
    <property type="entry name" value="P-loop containing nucleotide triphosphate hydrolases"/>
    <property type="match status" value="2"/>
</dbReference>
<dbReference type="InterPro" id="IPR011545">
    <property type="entry name" value="DEAD/DEAH_box_helicase_dom"/>
</dbReference>
<dbReference type="InterPro" id="IPR014001">
    <property type="entry name" value="Helicase_ATP-bd"/>
</dbReference>
<dbReference type="InterPro" id="IPR001650">
    <property type="entry name" value="Helicase_C-like"/>
</dbReference>
<dbReference type="InterPro" id="IPR027417">
    <property type="entry name" value="P-loop_NTPase"/>
</dbReference>
<dbReference type="InterPro" id="IPR014014">
    <property type="entry name" value="RNA_helicase_DEAD_Q_motif"/>
</dbReference>
<dbReference type="PANTHER" id="PTHR47958">
    <property type="entry name" value="ATP-DEPENDENT RNA HELICASE DBP3"/>
    <property type="match status" value="1"/>
</dbReference>
<dbReference type="Pfam" id="PF00270">
    <property type="entry name" value="DEAD"/>
    <property type="match status" value="1"/>
</dbReference>
<dbReference type="Pfam" id="PF00271">
    <property type="entry name" value="Helicase_C"/>
    <property type="match status" value="1"/>
</dbReference>
<dbReference type="SMART" id="SM00487">
    <property type="entry name" value="DEXDc"/>
    <property type="match status" value="1"/>
</dbReference>
<dbReference type="SMART" id="SM00490">
    <property type="entry name" value="HELICc"/>
    <property type="match status" value="1"/>
</dbReference>
<dbReference type="SUPFAM" id="SSF52540">
    <property type="entry name" value="P-loop containing nucleoside triphosphate hydrolases"/>
    <property type="match status" value="1"/>
</dbReference>
<dbReference type="PROSITE" id="PS51192">
    <property type="entry name" value="HELICASE_ATP_BIND_1"/>
    <property type="match status" value="1"/>
</dbReference>
<dbReference type="PROSITE" id="PS51194">
    <property type="entry name" value="HELICASE_CTER"/>
    <property type="match status" value="1"/>
</dbReference>
<dbReference type="PROSITE" id="PS51195">
    <property type="entry name" value="Q_MOTIF"/>
    <property type="match status" value="1"/>
</dbReference>
<feature type="chain" id="PRO_0000055080" description="ATP-dependent RNA helicase WM6">
    <location>
        <begin position="1"/>
        <end position="424"/>
    </location>
</feature>
<feature type="domain" description="Helicase ATP-binding" evidence="1">
    <location>
        <begin position="72"/>
        <end position="246"/>
    </location>
</feature>
<feature type="domain" description="Helicase C-terminal" evidence="2">
    <location>
        <begin position="258"/>
        <end position="419"/>
    </location>
</feature>
<feature type="region of interest" description="Disordered" evidence="3">
    <location>
        <begin position="1"/>
        <end position="27"/>
    </location>
</feature>
<feature type="short sequence motif" description="Q motif">
    <location>
        <begin position="41"/>
        <end position="69"/>
    </location>
</feature>
<feature type="short sequence motif" description="DECD box">
    <location>
        <begin position="193"/>
        <end position="196"/>
    </location>
</feature>
<feature type="compositionally biased region" description="Acidic residues" evidence="3">
    <location>
        <begin position="1"/>
        <end position="16"/>
    </location>
</feature>
<feature type="binding site" evidence="1">
    <location>
        <begin position="85"/>
        <end position="92"/>
    </location>
    <ligand>
        <name>ATP</name>
        <dbReference type="ChEBI" id="CHEBI:30616"/>
    </ligand>
</feature>
<keyword id="KW-0067">ATP-binding</keyword>
<keyword id="KW-0347">Helicase</keyword>
<keyword id="KW-0378">Hydrolase</keyword>
<keyword id="KW-0507">mRNA processing</keyword>
<keyword id="KW-0508">mRNA splicing</keyword>
<keyword id="KW-0547">Nucleotide-binding</keyword>
<keyword id="KW-0539">Nucleus</keyword>
<keyword id="KW-1185">Reference proteome</keyword>
<keyword id="KW-0694">RNA-binding</keyword>
<keyword id="KW-0747">Spliceosome</keyword>
<protein>
    <recommendedName>
        <fullName>ATP-dependent RNA helicase WM6</fullName>
        <shortName>DEAD box protein UAP56</shortName>
        <shortName>Dmrnahel</shortName>
        <ecNumber>3.6.4.13</ecNumber>
    </recommendedName>
    <alternativeName>
        <fullName>HEL/UAP56</fullName>
    </alternativeName>
</protein>
<gene>
    <name type="primary">Hel25E</name>
    <name type="synonym">Dbp25F</name>
    <name type="synonym">hel</name>
    <name type="synonym">WM6</name>
    <name type="ORF">CG7269</name>
</gene>
<sequence>MADNDDLLDYEDEEQTETTAVENQEAPKKDVKGTYVSIHSSGFRDFLLKPEILRAIVDCGFEHPSEVQHECIPQAVLGMDILCQAKSGMGKTAVFVLATLQQLEPSDNNTCHVLVMCHTRELAFQISKEYERFSKYMPTVKVAVFFGGMAIQKDEETLKSGTPHIVVGTPGRILALIRNKKLNLKLLKHFVLDECDKMLEQLDMRRDVQEIFRSTPHGKQVMMFSATLSKDIRPVCKKFMQDPMEVYVDDEAKLTLHGLQQHYVNLKENEKNKKLFELLDVLEFNQVVIFVKSVQRCVALSQLLTEQNFPAIGIHRGMTQEERLNRYQQFKDFQKRILVATNLFGRGMDIERVNIVFNYDMPEDSDTYLHRVARAGRFGTKGLAITFVSDENDAKILNEVQDRFDVNISELPEEIDLSTYIEGR</sequence>
<accession>Q27268</accession>
<accession>Q540X0</accession>
<accession>Q9VMQ1</accession>
<name>DX39B_DROME</name>
<organism>
    <name type="scientific">Drosophila melanogaster</name>
    <name type="common">Fruit fly</name>
    <dbReference type="NCBI Taxonomy" id="7227"/>
    <lineage>
        <taxon>Eukaryota</taxon>
        <taxon>Metazoa</taxon>
        <taxon>Ecdysozoa</taxon>
        <taxon>Arthropoda</taxon>
        <taxon>Hexapoda</taxon>
        <taxon>Insecta</taxon>
        <taxon>Pterygota</taxon>
        <taxon>Neoptera</taxon>
        <taxon>Endopterygota</taxon>
        <taxon>Diptera</taxon>
        <taxon>Brachycera</taxon>
        <taxon>Muscomorpha</taxon>
        <taxon>Ephydroidea</taxon>
        <taxon>Drosophilidae</taxon>
        <taxon>Drosophila</taxon>
        <taxon>Sophophora</taxon>
    </lineage>
</organism>
<reference key="1">
    <citation type="journal article" date="1994" name="Mol. Gen. Genet.">
        <title>A Drosophila gene encoding a DEAD box RNA helicase can suppress loss of wee1/mik1 function in Schizosaccharomyces pombe.</title>
        <authorList>
            <person name="Warbrick E."/>
            <person name="Glover D."/>
        </authorList>
    </citation>
    <scope>NUCLEOTIDE SEQUENCE [MRNA]</scope>
    <source>
        <strain>Oregon-R</strain>
        <tissue>Embryo</tissue>
    </source>
</reference>
<reference key="2">
    <citation type="journal article" date="1997" name="Genetics">
        <title>A new enhancer of position-effect variegation in Drosophila melanogaster encodes a putative RNA helicase that binds chromosomes and is regulated by the cell cycle.</title>
        <authorList>
            <person name="Eberl D.F."/>
            <person name="Lorenz L.J."/>
            <person name="Melnick M.B."/>
            <person name="Sood V."/>
            <person name="Lasko P."/>
            <person name="Perrimon N."/>
        </authorList>
    </citation>
    <scope>NUCLEOTIDE SEQUENCE [GENOMIC DNA]</scope>
    <scope>FUNCTION</scope>
    <scope>SUBCELLULAR LOCATION</scope>
    <scope>DEVELOPMENTAL STAGE</scope>
</reference>
<reference key="3">
    <citation type="journal article" date="2000" name="Science">
        <title>The genome sequence of Drosophila melanogaster.</title>
        <authorList>
            <person name="Adams M.D."/>
            <person name="Celniker S.E."/>
            <person name="Holt R.A."/>
            <person name="Evans C.A."/>
            <person name="Gocayne J.D."/>
            <person name="Amanatides P.G."/>
            <person name="Scherer S.E."/>
            <person name="Li P.W."/>
            <person name="Hoskins R.A."/>
            <person name="Galle R.F."/>
            <person name="George R.A."/>
            <person name="Lewis S.E."/>
            <person name="Richards S."/>
            <person name="Ashburner M."/>
            <person name="Henderson S.N."/>
            <person name="Sutton G.G."/>
            <person name="Wortman J.R."/>
            <person name="Yandell M.D."/>
            <person name="Zhang Q."/>
            <person name="Chen L.X."/>
            <person name="Brandon R.C."/>
            <person name="Rogers Y.-H.C."/>
            <person name="Blazej R.G."/>
            <person name="Champe M."/>
            <person name="Pfeiffer B.D."/>
            <person name="Wan K.H."/>
            <person name="Doyle C."/>
            <person name="Baxter E.G."/>
            <person name="Helt G."/>
            <person name="Nelson C.R."/>
            <person name="Miklos G.L.G."/>
            <person name="Abril J.F."/>
            <person name="Agbayani A."/>
            <person name="An H.-J."/>
            <person name="Andrews-Pfannkoch C."/>
            <person name="Baldwin D."/>
            <person name="Ballew R.M."/>
            <person name="Basu A."/>
            <person name="Baxendale J."/>
            <person name="Bayraktaroglu L."/>
            <person name="Beasley E.M."/>
            <person name="Beeson K.Y."/>
            <person name="Benos P.V."/>
            <person name="Berman B.P."/>
            <person name="Bhandari D."/>
            <person name="Bolshakov S."/>
            <person name="Borkova D."/>
            <person name="Botchan M.R."/>
            <person name="Bouck J."/>
            <person name="Brokstein P."/>
            <person name="Brottier P."/>
            <person name="Burtis K.C."/>
            <person name="Busam D.A."/>
            <person name="Butler H."/>
            <person name="Cadieu E."/>
            <person name="Center A."/>
            <person name="Chandra I."/>
            <person name="Cherry J.M."/>
            <person name="Cawley S."/>
            <person name="Dahlke C."/>
            <person name="Davenport L.B."/>
            <person name="Davies P."/>
            <person name="de Pablos B."/>
            <person name="Delcher A."/>
            <person name="Deng Z."/>
            <person name="Mays A.D."/>
            <person name="Dew I."/>
            <person name="Dietz S.M."/>
            <person name="Dodson K."/>
            <person name="Doup L.E."/>
            <person name="Downes M."/>
            <person name="Dugan-Rocha S."/>
            <person name="Dunkov B.C."/>
            <person name="Dunn P."/>
            <person name="Durbin K.J."/>
            <person name="Evangelista C.C."/>
            <person name="Ferraz C."/>
            <person name="Ferriera S."/>
            <person name="Fleischmann W."/>
            <person name="Fosler C."/>
            <person name="Gabrielian A.E."/>
            <person name="Garg N.S."/>
            <person name="Gelbart W.M."/>
            <person name="Glasser K."/>
            <person name="Glodek A."/>
            <person name="Gong F."/>
            <person name="Gorrell J.H."/>
            <person name="Gu Z."/>
            <person name="Guan P."/>
            <person name="Harris M."/>
            <person name="Harris N.L."/>
            <person name="Harvey D.A."/>
            <person name="Heiman T.J."/>
            <person name="Hernandez J.R."/>
            <person name="Houck J."/>
            <person name="Hostin D."/>
            <person name="Houston K.A."/>
            <person name="Howland T.J."/>
            <person name="Wei M.-H."/>
            <person name="Ibegwam C."/>
            <person name="Jalali M."/>
            <person name="Kalush F."/>
            <person name="Karpen G.H."/>
            <person name="Ke Z."/>
            <person name="Kennison J.A."/>
            <person name="Ketchum K.A."/>
            <person name="Kimmel B.E."/>
            <person name="Kodira C.D."/>
            <person name="Kraft C.L."/>
            <person name="Kravitz S."/>
            <person name="Kulp D."/>
            <person name="Lai Z."/>
            <person name="Lasko P."/>
            <person name="Lei Y."/>
            <person name="Levitsky A.A."/>
            <person name="Li J.H."/>
            <person name="Li Z."/>
            <person name="Liang Y."/>
            <person name="Lin X."/>
            <person name="Liu X."/>
            <person name="Mattei B."/>
            <person name="McIntosh T.C."/>
            <person name="McLeod M.P."/>
            <person name="McPherson D."/>
            <person name="Merkulov G."/>
            <person name="Milshina N.V."/>
            <person name="Mobarry C."/>
            <person name="Morris J."/>
            <person name="Moshrefi A."/>
            <person name="Mount S.M."/>
            <person name="Moy M."/>
            <person name="Murphy B."/>
            <person name="Murphy L."/>
            <person name="Muzny D.M."/>
            <person name="Nelson D.L."/>
            <person name="Nelson D.R."/>
            <person name="Nelson K.A."/>
            <person name="Nixon K."/>
            <person name="Nusskern D.R."/>
            <person name="Pacleb J.M."/>
            <person name="Palazzolo M."/>
            <person name="Pittman G.S."/>
            <person name="Pan S."/>
            <person name="Pollard J."/>
            <person name="Puri V."/>
            <person name="Reese M.G."/>
            <person name="Reinert K."/>
            <person name="Remington K."/>
            <person name="Saunders R.D.C."/>
            <person name="Scheeler F."/>
            <person name="Shen H."/>
            <person name="Shue B.C."/>
            <person name="Siden-Kiamos I."/>
            <person name="Simpson M."/>
            <person name="Skupski M.P."/>
            <person name="Smith T.J."/>
            <person name="Spier E."/>
            <person name="Spradling A.C."/>
            <person name="Stapleton M."/>
            <person name="Strong R."/>
            <person name="Sun E."/>
            <person name="Svirskas R."/>
            <person name="Tector C."/>
            <person name="Turner R."/>
            <person name="Venter E."/>
            <person name="Wang A.H."/>
            <person name="Wang X."/>
            <person name="Wang Z.-Y."/>
            <person name="Wassarman D.A."/>
            <person name="Weinstock G.M."/>
            <person name="Weissenbach J."/>
            <person name="Williams S.M."/>
            <person name="Woodage T."/>
            <person name="Worley K.C."/>
            <person name="Wu D."/>
            <person name="Yang S."/>
            <person name="Yao Q.A."/>
            <person name="Ye J."/>
            <person name="Yeh R.-F."/>
            <person name="Zaveri J.S."/>
            <person name="Zhan M."/>
            <person name="Zhang G."/>
            <person name="Zhao Q."/>
            <person name="Zheng L."/>
            <person name="Zheng X.H."/>
            <person name="Zhong F.N."/>
            <person name="Zhong W."/>
            <person name="Zhou X."/>
            <person name="Zhu S.C."/>
            <person name="Zhu X."/>
            <person name="Smith H.O."/>
            <person name="Gibbs R.A."/>
            <person name="Myers E.W."/>
            <person name="Rubin G.M."/>
            <person name="Venter J.C."/>
        </authorList>
    </citation>
    <scope>NUCLEOTIDE SEQUENCE [LARGE SCALE GENOMIC DNA]</scope>
    <source>
        <strain>Berkeley</strain>
    </source>
</reference>
<reference key="4">
    <citation type="journal article" date="2002" name="Genome Biol.">
        <title>Annotation of the Drosophila melanogaster euchromatic genome: a systematic review.</title>
        <authorList>
            <person name="Misra S."/>
            <person name="Crosby M.A."/>
            <person name="Mungall C.J."/>
            <person name="Matthews B.B."/>
            <person name="Campbell K.S."/>
            <person name="Hradecky P."/>
            <person name="Huang Y."/>
            <person name="Kaminker J.S."/>
            <person name="Millburn G.H."/>
            <person name="Prochnik S.E."/>
            <person name="Smith C.D."/>
            <person name="Tupy J.L."/>
            <person name="Whitfield E.J."/>
            <person name="Bayraktaroglu L."/>
            <person name="Berman B.P."/>
            <person name="Bettencourt B.R."/>
            <person name="Celniker S.E."/>
            <person name="de Grey A.D.N.J."/>
            <person name="Drysdale R.A."/>
            <person name="Harris N.L."/>
            <person name="Richter J."/>
            <person name="Russo S."/>
            <person name="Schroeder A.J."/>
            <person name="Shu S.Q."/>
            <person name="Stapleton M."/>
            <person name="Yamada C."/>
            <person name="Ashburner M."/>
            <person name="Gelbart W.M."/>
            <person name="Rubin G.M."/>
            <person name="Lewis S.E."/>
        </authorList>
    </citation>
    <scope>GENOME REANNOTATION</scope>
    <source>
        <strain>Berkeley</strain>
    </source>
</reference>
<reference key="5">
    <citation type="journal article" date="2002" name="Genome Biol.">
        <title>A Drosophila full-length cDNA resource.</title>
        <authorList>
            <person name="Stapleton M."/>
            <person name="Carlson J.W."/>
            <person name="Brokstein P."/>
            <person name="Yu C."/>
            <person name="Champe M."/>
            <person name="George R.A."/>
            <person name="Guarin H."/>
            <person name="Kronmiller B."/>
            <person name="Pacleb J.M."/>
            <person name="Park S."/>
            <person name="Wan K.H."/>
            <person name="Rubin G.M."/>
            <person name="Celniker S.E."/>
        </authorList>
    </citation>
    <scope>NUCLEOTIDE SEQUENCE [LARGE SCALE MRNA]</scope>
    <source>
        <strain>Berkeley</strain>
        <tissue>Embryo</tissue>
    </source>
</reference>
<reference key="6">
    <citation type="journal article" date="2001" name="Curr. Biol.">
        <title>The DExH/D box protein HEL/UAP56 is essential for mRNA nuclear export in Drosophila.</title>
        <authorList>
            <person name="Gatfield D."/>
            <person name="Le Hir H."/>
            <person name="Schmitt C."/>
            <person name="Braun I.C."/>
            <person name="Koecher T."/>
            <person name="Wilm M."/>
            <person name="Izaurralde E."/>
        </authorList>
    </citation>
    <scope>FUNCTION</scope>
    <scope>SUBCELLULAR LOCATION</scope>
    <scope>INTERACTION WITH THE EXON JUNCTION COMPLEX</scope>
</reference>
<reference key="7">
    <citation type="journal article" date="2003" name="EMBO J.">
        <title>Genome-wide analysis of nuclear mRNA export pathways in Drosophila.</title>
        <authorList>
            <person name="Herold A."/>
            <person name="Teixeira L."/>
            <person name="Izaurralde E."/>
        </authorList>
    </citation>
    <scope>FUNCTION</scope>
</reference>
<evidence type="ECO:0000255" key="1">
    <source>
        <dbReference type="PROSITE-ProRule" id="PRU00541"/>
    </source>
</evidence>
<evidence type="ECO:0000255" key="2">
    <source>
        <dbReference type="PROSITE-ProRule" id="PRU00542"/>
    </source>
</evidence>
<evidence type="ECO:0000256" key="3">
    <source>
        <dbReference type="SAM" id="MobiDB-lite"/>
    </source>
</evidence>
<evidence type="ECO:0000269" key="4">
    <source>
    </source>
</evidence>
<evidence type="ECO:0000269" key="5">
    <source>
    </source>
</evidence>
<evidence type="ECO:0000269" key="6">
    <source>
    </source>
</evidence>
<evidence type="ECO:0000305" key="7"/>
<proteinExistence type="evidence at protein level"/>
<comment type="function">
    <text evidence="4 5 6">Required for mRNA export out of the nucleus. Probable RNA helicase that may regulate entry into mitosis by down-regulating the expression of other genes whose activity may be rate-limiting for entry into mitosis during embryogenesis. Binds to salivary gland chromosomes and modifies position effect variegation. Promotes an open chromatin structure that favors transcription during development by regulating the spread of heterochromatin.</text>
</comment>
<comment type="catalytic activity">
    <reaction>
        <text>ATP + H2O = ADP + phosphate + H(+)</text>
        <dbReference type="Rhea" id="RHEA:13065"/>
        <dbReference type="ChEBI" id="CHEBI:15377"/>
        <dbReference type="ChEBI" id="CHEBI:15378"/>
        <dbReference type="ChEBI" id="CHEBI:30616"/>
        <dbReference type="ChEBI" id="CHEBI:43474"/>
        <dbReference type="ChEBI" id="CHEBI:456216"/>
        <dbReference type="EC" id="3.6.4.13"/>
    </reaction>
</comment>
<comment type="subunit">
    <text evidence="4 7">Component of the spliceosome (Probable). Interacts with the exon junction complex.</text>
</comment>
<comment type="subcellular location">
    <subcellularLocation>
        <location evidence="4 6">Nucleus speckle</location>
    </subcellularLocation>
    <text>Locates to nuclei of embryos and ovaries, but disappears in mitotic domains of embryos as chromosomes condense.</text>
</comment>
<comment type="developmental stage">
    <text evidence="6">Expressed both maternally and zygotically.</text>
</comment>
<comment type="similarity">
    <text evidence="7">Belongs to the DEAD box helicase family. DECD subfamily.</text>
</comment>